<name>CH60_LIMRJ</name>
<evidence type="ECO:0000255" key="1">
    <source>
        <dbReference type="HAMAP-Rule" id="MF_00600"/>
    </source>
</evidence>
<evidence type="ECO:0000256" key="2">
    <source>
        <dbReference type="SAM" id="MobiDB-lite"/>
    </source>
</evidence>
<dbReference type="EC" id="5.6.1.7" evidence="1"/>
<dbReference type="EMBL" id="AP007281">
    <property type="protein sequence ID" value="BAG24859.1"/>
    <property type="molecule type" value="Genomic_DNA"/>
</dbReference>
<dbReference type="RefSeq" id="WP_003667426.1">
    <property type="nucleotide sequence ID" value="NC_010609.1"/>
</dbReference>
<dbReference type="SMR" id="B2G5X7"/>
<dbReference type="GeneID" id="77190157"/>
<dbReference type="KEGG" id="lrf:LAR_0343"/>
<dbReference type="HOGENOM" id="CLU_016503_3_0_9"/>
<dbReference type="GO" id="GO:0005737">
    <property type="term" value="C:cytoplasm"/>
    <property type="evidence" value="ECO:0007669"/>
    <property type="project" value="UniProtKB-SubCell"/>
</dbReference>
<dbReference type="GO" id="GO:0005524">
    <property type="term" value="F:ATP binding"/>
    <property type="evidence" value="ECO:0007669"/>
    <property type="project" value="UniProtKB-UniRule"/>
</dbReference>
<dbReference type="GO" id="GO:0140662">
    <property type="term" value="F:ATP-dependent protein folding chaperone"/>
    <property type="evidence" value="ECO:0007669"/>
    <property type="project" value="InterPro"/>
</dbReference>
<dbReference type="GO" id="GO:0016853">
    <property type="term" value="F:isomerase activity"/>
    <property type="evidence" value="ECO:0007669"/>
    <property type="project" value="UniProtKB-KW"/>
</dbReference>
<dbReference type="GO" id="GO:0051082">
    <property type="term" value="F:unfolded protein binding"/>
    <property type="evidence" value="ECO:0007669"/>
    <property type="project" value="UniProtKB-UniRule"/>
</dbReference>
<dbReference type="GO" id="GO:0042026">
    <property type="term" value="P:protein refolding"/>
    <property type="evidence" value="ECO:0007669"/>
    <property type="project" value="UniProtKB-UniRule"/>
</dbReference>
<dbReference type="CDD" id="cd03344">
    <property type="entry name" value="GroEL"/>
    <property type="match status" value="1"/>
</dbReference>
<dbReference type="FunFam" id="3.50.7.10:FF:000001">
    <property type="entry name" value="60 kDa chaperonin"/>
    <property type="match status" value="1"/>
</dbReference>
<dbReference type="Gene3D" id="3.50.7.10">
    <property type="entry name" value="GroEL"/>
    <property type="match status" value="1"/>
</dbReference>
<dbReference type="Gene3D" id="1.10.560.10">
    <property type="entry name" value="GroEL-like equatorial domain"/>
    <property type="match status" value="1"/>
</dbReference>
<dbReference type="Gene3D" id="3.30.260.10">
    <property type="entry name" value="TCP-1-like chaperonin intermediate domain"/>
    <property type="match status" value="1"/>
</dbReference>
<dbReference type="HAMAP" id="MF_00600">
    <property type="entry name" value="CH60"/>
    <property type="match status" value="1"/>
</dbReference>
<dbReference type="InterPro" id="IPR018370">
    <property type="entry name" value="Chaperonin_Cpn60_CS"/>
</dbReference>
<dbReference type="InterPro" id="IPR001844">
    <property type="entry name" value="Cpn60/GroEL"/>
</dbReference>
<dbReference type="InterPro" id="IPR002423">
    <property type="entry name" value="Cpn60/GroEL/TCP-1"/>
</dbReference>
<dbReference type="InterPro" id="IPR027409">
    <property type="entry name" value="GroEL-like_apical_dom_sf"/>
</dbReference>
<dbReference type="InterPro" id="IPR027413">
    <property type="entry name" value="GROEL-like_equatorial_sf"/>
</dbReference>
<dbReference type="InterPro" id="IPR027410">
    <property type="entry name" value="TCP-1-like_intermed_sf"/>
</dbReference>
<dbReference type="NCBIfam" id="TIGR02348">
    <property type="entry name" value="GroEL"/>
    <property type="match status" value="1"/>
</dbReference>
<dbReference type="NCBIfam" id="NF000592">
    <property type="entry name" value="PRK00013.1"/>
    <property type="match status" value="1"/>
</dbReference>
<dbReference type="NCBIfam" id="NF009487">
    <property type="entry name" value="PRK12849.1"/>
    <property type="match status" value="1"/>
</dbReference>
<dbReference type="NCBIfam" id="NF009488">
    <property type="entry name" value="PRK12850.1"/>
    <property type="match status" value="1"/>
</dbReference>
<dbReference type="NCBIfam" id="NF009489">
    <property type="entry name" value="PRK12851.1"/>
    <property type="match status" value="1"/>
</dbReference>
<dbReference type="PANTHER" id="PTHR45633">
    <property type="entry name" value="60 KDA HEAT SHOCK PROTEIN, MITOCHONDRIAL"/>
    <property type="match status" value="1"/>
</dbReference>
<dbReference type="Pfam" id="PF00118">
    <property type="entry name" value="Cpn60_TCP1"/>
    <property type="match status" value="1"/>
</dbReference>
<dbReference type="PRINTS" id="PR00298">
    <property type="entry name" value="CHAPERONIN60"/>
</dbReference>
<dbReference type="SUPFAM" id="SSF52029">
    <property type="entry name" value="GroEL apical domain-like"/>
    <property type="match status" value="1"/>
</dbReference>
<dbReference type="SUPFAM" id="SSF48592">
    <property type="entry name" value="GroEL equatorial domain-like"/>
    <property type="match status" value="1"/>
</dbReference>
<dbReference type="SUPFAM" id="SSF54849">
    <property type="entry name" value="GroEL-intermediate domain like"/>
    <property type="match status" value="1"/>
</dbReference>
<dbReference type="PROSITE" id="PS00296">
    <property type="entry name" value="CHAPERONINS_CPN60"/>
    <property type="match status" value="1"/>
</dbReference>
<organism>
    <name type="scientific">Limosilactobacillus reuteri subsp. reuteri (strain JCM 1112)</name>
    <name type="common">Lactobacillus reuteri</name>
    <dbReference type="NCBI Taxonomy" id="557433"/>
    <lineage>
        <taxon>Bacteria</taxon>
        <taxon>Bacillati</taxon>
        <taxon>Bacillota</taxon>
        <taxon>Bacilli</taxon>
        <taxon>Lactobacillales</taxon>
        <taxon>Lactobacillaceae</taxon>
        <taxon>Limosilactobacillus</taxon>
    </lineage>
</organism>
<sequence>MAKEIKFSEDARSAMLSGVDKLADTVKTTMGPKGRNVVLEQSYGTPTITNDGVTIAKSIELENQFENMGAKLVAEVASKTNDIAGDGTTTATVLTQAIVNAGMKNVTSGANPVGIRRGIDKATEVAVEALKKMSHDVKTKDDIEQIASISAANPEVGKLIADAMEKVGHDGVITIEDSRGVDTSVDVVEGMSFDRGYMSQYMVTDNDKMEADLDNPYILITDKKISNIQDILPLLQSVVQEGRALLIIADDITGEALPTLVLNKIRGTFNVVSVKAPGFGDRRKAQLQDIAVLTGGTVISDDLGMSLKDATVDQLGQANKVTVTKDTTTIVDGAGSKEAIQERVDQIKQEIAKSTSDFDKEKLQERLAKLSGGVAVVKVGAATETELKEKKYRIEDALNATRAAVQEGFVPGGGTALINVIPALDKIEADGDELTGINIVKAALEAPVRQIAENAGVEGSVIVNELKNEKEGIGYNAADGKFEDMIKAGIVDPTMVTRSALQNAASVSALLLTTEAVVADKPDPNANNQAPAAPQGGMGGMM</sequence>
<reference key="1">
    <citation type="journal article" date="2008" name="DNA Res.">
        <title>Comparative genome analysis of Lactobacillus reuteri and Lactobacillus fermentum reveal a genomic island for reuterin and cobalamin production.</title>
        <authorList>
            <person name="Morita H."/>
            <person name="Toh H."/>
            <person name="Fukuda S."/>
            <person name="Horikawa H."/>
            <person name="Oshima K."/>
            <person name="Suzuki T."/>
            <person name="Murakami M."/>
            <person name="Hisamatsu S."/>
            <person name="Kato Y."/>
            <person name="Takizawa T."/>
            <person name="Fukuoka H."/>
            <person name="Yoshimura T."/>
            <person name="Itoh K."/>
            <person name="O'Sullivan D.J."/>
            <person name="McKay L.L."/>
            <person name="Ohno H."/>
            <person name="Kikuchi J."/>
            <person name="Masaoka T."/>
            <person name="Hattori M."/>
        </authorList>
    </citation>
    <scope>NUCLEOTIDE SEQUENCE [LARGE SCALE GENOMIC DNA]</scope>
    <source>
        <strain>JCM 1112</strain>
    </source>
</reference>
<gene>
    <name evidence="1" type="primary">groEL</name>
    <name evidence="1" type="synonym">groL</name>
    <name type="ordered locus">LAR_0343</name>
</gene>
<protein>
    <recommendedName>
        <fullName evidence="1">Chaperonin GroEL</fullName>
        <ecNumber evidence="1">5.6.1.7</ecNumber>
    </recommendedName>
    <alternativeName>
        <fullName evidence="1">60 kDa chaperonin</fullName>
    </alternativeName>
    <alternativeName>
        <fullName evidence="1">Chaperonin-60</fullName>
        <shortName evidence="1">Cpn60</shortName>
    </alternativeName>
</protein>
<comment type="function">
    <text evidence="1">Together with its co-chaperonin GroES, plays an essential role in assisting protein folding. The GroEL-GroES system forms a nano-cage that allows encapsulation of the non-native substrate proteins and provides a physical environment optimized to promote and accelerate protein folding.</text>
</comment>
<comment type="catalytic activity">
    <reaction evidence="1">
        <text>ATP + H2O + a folded polypeptide = ADP + phosphate + an unfolded polypeptide.</text>
        <dbReference type="EC" id="5.6.1.7"/>
    </reaction>
</comment>
<comment type="subunit">
    <text evidence="1">Forms a cylinder of 14 subunits composed of two heptameric rings stacked back-to-back. Interacts with the co-chaperonin GroES.</text>
</comment>
<comment type="subcellular location">
    <subcellularLocation>
        <location evidence="1">Cytoplasm</location>
    </subcellularLocation>
</comment>
<comment type="similarity">
    <text evidence="1">Belongs to the chaperonin (HSP60) family.</text>
</comment>
<accession>B2G5X7</accession>
<keyword id="KW-0067">ATP-binding</keyword>
<keyword id="KW-0143">Chaperone</keyword>
<keyword id="KW-0963">Cytoplasm</keyword>
<keyword id="KW-0413">Isomerase</keyword>
<keyword id="KW-0547">Nucleotide-binding</keyword>
<proteinExistence type="inferred from homology"/>
<feature type="chain" id="PRO_1000130031" description="Chaperonin GroEL">
    <location>
        <begin position="1"/>
        <end position="542"/>
    </location>
</feature>
<feature type="region of interest" description="Disordered" evidence="2">
    <location>
        <begin position="521"/>
        <end position="542"/>
    </location>
</feature>
<feature type="compositionally biased region" description="Low complexity" evidence="2">
    <location>
        <begin position="524"/>
        <end position="535"/>
    </location>
</feature>
<feature type="binding site" evidence="1">
    <location>
        <begin position="29"/>
        <end position="32"/>
    </location>
    <ligand>
        <name>ATP</name>
        <dbReference type="ChEBI" id="CHEBI:30616"/>
    </ligand>
</feature>
<feature type="binding site" evidence="1">
    <location>
        <begin position="86"/>
        <end position="90"/>
    </location>
    <ligand>
        <name>ATP</name>
        <dbReference type="ChEBI" id="CHEBI:30616"/>
    </ligand>
</feature>
<feature type="binding site" evidence="1">
    <location>
        <position position="413"/>
    </location>
    <ligand>
        <name>ATP</name>
        <dbReference type="ChEBI" id="CHEBI:30616"/>
    </ligand>
</feature>
<feature type="binding site" evidence="1">
    <location>
        <begin position="476"/>
        <end position="478"/>
    </location>
    <ligand>
        <name>ATP</name>
        <dbReference type="ChEBI" id="CHEBI:30616"/>
    </ligand>
</feature>
<feature type="binding site" evidence="1">
    <location>
        <position position="492"/>
    </location>
    <ligand>
        <name>ATP</name>
        <dbReference type="ChEBI" id="CHEBI:30616"/>
    </ligand>
</feature>